<keyword id="KW-0004">4Fe-4S</keyword>
<keyword id="KW-0028">Amino-acid biosynthesis</keyword>
<keyword id="KW-0198">Cysteine biosynthesis</keyword>
<keyword id="KW-0349">Heme</keyword>
<keyword id="KW-0408">Iron</keyword>
<keyword id="KW-0411">Iron-sulfur</keyword>
<keyword id="KW-0479">Metal-binding</keyword>
<keyword id="KW-0521">NADP</keyword>
<keyword id="KW-0560">Oxidoreductase</keyword>
<keyword id="KW-1185">Reference proteome</keyword>
<dbReference type="EC" id="1.8.1.2" evidence="2"/>
<dbReference type="EMBL" id="AE005174">
    <property type="protein sequence ID" value="AAG57871.1"/>
    <property type="molecule type" value="Genomic_DNA"/>
</dbReference>
<dbReference type="EMBL" id="BA000007">
    <property type="protein sequence ID" value="BAB37041.1"/>
    <property type="molecule type" value="Genomic_DNA"/>
</dbReference>
<dbReference type="PIR" id="B91081">
    <property type="entry name" value="B91081"/>
</dbReference>
<dbReference type="PIR" id="C85926">
    <property type="entry name" value="C85926"/>
</dbReference>
<dbReference type="RefSeq" id="NP_311645.1">
    <property type="nucleotide sequence ID" value="NC_002695.1"/>
</dbReference>
<dbReference type="RefSeq" id="WP_001290706.1">
    <property type="nucleotide sequence ID" value="NZ_VOAI01000003.1"/>
</dbReference>
<dbReference type="SMR" id="Q8X7U2"/>
<dbReference type="STRING" id="155864.Z4073"/>
<dbReference type="GeneID" id="75205593"/>
<dbReference type="GeneID" id="914660"/>
<dbReference type="KEGG" id="ece:Z4073"/>
<dbReference type="KEGG" id="ecs:ECs_3618"/>
<dbReference type="PATRIC" id="fig|386585.9.peg.3782"/>
<dbReference type="eggNOG" id="COG0155">
    <property type="taxonomic scope" value="Bacteria"/>
</dbReference>
<dbReference type="HOGENOM" id="CLU_001975_3_2_6"/>
<dbReference type="OMA" id="IKISGCM"/>
<dbReference type="UniPathway" id="UPA00140">
    <property type="reaction ID" value="UER00207"/>
</dbReference>
<dbReference type="Proteomes" id="UP000000558">
    <property type="component" value="Chromosome"/>
</dbReference>
<dbReference type="Proteomes" id="UP000002519">
    <property type="component" value="Chromosome"/>
</dbReference>
<dbReference type="GO" id="GO:0009337">
    <property type="term" value="C:sulfite reductase complex (NADPH)"/>
    <property type="evidence" value="ECO:0007669"/>
    <property type="project" value="InterPro"/>
</dbReference>
<dbReference type="GO" id="GO:0051539">
    <property type="term" value="F:4 iron, 4 sulfur cluster binding"/>
    <property type="evidence" value="ECO:0007669"/>
    <property type="project" value="UniProtKB-KW"/>
</dbReference>
<dbReference type="GO" id="GO:0020037">
    <property type="term" value="F:heme binding"/>
    <property type="evidence" value="ECO:0007669"/>
    <property type="project" value="InterPro"/>
</dbReference>
<dbReference type="GO" id="GO:0046872">
    <property type="term" value="F:metal ion binding"/>
    <property type="evidence" value="ECO:0007669"/>
    <property type="project" value="UniProtKB-KW"/>
</dbReference>
<dbReference type="GO" id="GO:0050661">
    <property type="term" value="F:NADP binding"/>
    <property type="evidence" value="ECO:0007669"/>
    <property type="project" value="InterPro"/>
</dbReference>
<dbReference type="GO" id="GO:0050311">
    <property type="term" value="F:sulfite reductase (ferredoxin) activity"/>
    <property type="evidence" value="ECO:0007669"/>
    <property type="project" value="TreeGrafter"/>
</dbReference>
<dbReference type="GO" id="GO:0004783">
    <property type="term" value="F:sulfite reductase (NADPH) activity"/>
    <property type="evidence" value="ECO:0007669"/>
    <property type="project" value="UniProtKB-UniRule"/>
</dbReference>
<dbReference type="GO" id="GO:0019344">
    <property type="term" value="P:cysteine biosynthetic process"/>
    <property type="evidence" value="ECO:0007669"/>
    <property type="project" value="UniProtKB-KW"/>
</dbReference>
<dbReference type="GO" id="GO:0070814">
    <property type="term" value="P:hydrogen sulfide biosynthetic process"/>
    <property type="evidence" value="ECO:0007669"/>
    <property type="project" value="UniProtKB-UniRule"/>
</dbReference>
<dbReference type="GO" id="GO:0000103">
    <property type="term" value="P:sulfate assimilation"/>
    <property type="evidence" value="ECO:0007669"/>
    <property type="project" value="UniProtKB-UniRule"/>
</dbReference>
<dbReference type="FunFam" id="3.30.413.10:FF:000003">
    <property type="entry name" value="Sulfite reductase [NADPH] hemoprotein beta-component"/>
    <property type="match status" value="1"/>
</dbReference>
<dbReference type="FunFam" id="3.30.413.10:FF:000004">
    <property type="entry name" value="Sulfite reductase [NADPH] hemoprotein beta-component"/>
    <property type="match status" value="1"/>
</dbReference>
<dbReference type="Gene3D" id="3.30.413.10">
    <property type="entry name" value="Sulfite Reductase Hemoprotein, domain 1"/>
    <property type="match status" value="2"/>
</dbReference>
<dbReference type="HAMAP" id="MF_01540">
    <property type="entry name" value="CysI"/>
    <property type="match status" value="1"/>
</dbReference>
<dbReference type="InterPro" id="IPR011786">
    <property type="entry name" value="CysI"/>
</dbReference>
<dbReference type="InterPro" id="IPR005117">
    <property type="entry name" value="NiRdtase/SiRdtase_haem-b_fer"/>
</dbReference>
<dbReference type="InterPro" id="IPR036136">
    <property type="entry name" value="Nit/Sulf_reduc_fer-like_dom_sf"/>
</dbReference>
<dbReference type="InterPro" id="IPR006067">
    <property type="entry name" value="NO2/SO3_Rdtase_4Fe4S_dom"/>
</dbReference>
<dbReference type="InterPro" id="IPR045169">
    <property type="entry name" value="NO2/SO3_Rdtase_4Fe4S_prot"/>
</dbReference>
<dbReference type="InterPro" id="IPR045854">
    <property type="entry name" value="NO2/SO3_Rdtase_4Fe4S_sf"/>
</dbReference>
<dbReference type="InterPro" id="IPR006066">
    <property type="entry name" value="NO2/SO3_Rdtase_FeS/sirohaem_BS"/>
</dbReference>
<dbReference type="NCBIfam" id="TIGR02041">
    <property type="entry name" value="CysI"/>
    <property type="match status" value="1"/>
</dbReference>
<dbReference type="NCBIfam" id="NF010029">
    <property type="entry name" value="PRK13504.1"/>
    <property type="match status" value="1"/>
</dbReference>
<dbReference type="PANTHER" id="PTHR11493:SF47">
    <property type="entry name" value="SULFITE REDUCTASE [NADPH] SUBUNIT BETA"/>
    <property type="match status" value="1"/>
</dbReference>
<dbReference type="PANTHER" id="PTHR11493">
    <property type="entry name" value="SULFITE REDUCTASE [NADPH] SUBUNIT BETA-RELATED"/>
    <property type="match status" value="1"/>
</dbReference>
<dbReference type="Pfam" id="PF01077">
    <property type="entry name" value="NIR_SIR"/>
    <property type="match status" value="1"/>
</dbReference>
<dbReference type="Pfam" id="PF03460">
    <property type="entry name" value="NIR_SIR_ferr"/>
    <property type="match status" value="2"/>
</dbReference>
<dbReference type="PRINTS" id="PR00397">
    <property type="entry name" value="SIROHAEM"/>
</dbReference>
<dbReference type="SUPFAM" id="SSF56014">
    <property type="entry name" value="Nitrite and sulphite reductase 4Fe-4S domain-like"/>
    <property type="match status" value="2"/>
</dbReference>
<dbReference type="SUPFAM" id="SSF55124">
    <property type="entry name" value="Nitrite/Sulfite reductase N-terminal domain-like"/>
    <property type="match status" value="2"/>
</dbReference>
<dbReference type="PROSITE" id="PS00365">
    <property type="entry name" value="NIR_SIR"/>
    <property type="match status" value="1"/>
</dbReference>
<reference key="1">
    <citation type="journal article" date="2001" name="Nature">
        <title>Genome sequence of enterohaemorrhagic Escherichia coli O157:H7.</title>
        <authorList>
            <person name="Perna N.T."/>
            <person name="Plunkett G. III"/>
            <person name="Burland V."/>
            <person name="Mau B."/>
            <person name="Glasner J.D."/>
            <person name="Rose D.J."/>
            <person name="Mayhew G.F."/>
            <person name="Evans P.S."/>
            <person name="Gregor J."/>
            <person name="Kirkpatrick H.A."/>
            <person name="Posfai G."/>
            <person name="Hackett J."/>
            <person name="Klink S."/>
            <person name="Boutin A."/>
            <person name="Shao Y."/>
            <person name="Miller L."/>
            <person name="Grotbeck E.J."/>
            <person name="Davis N.W."/>
            <person name="Lim A."/>
            <person name="Dimalanta E.T."/>
            <person name="Potamousis K."/>
            <person name="Apodaca J."/>
            <person name="Anantharaman T.S."/>
            <person name="Lin J."/>
            <person name="Yen G."/>
            <person name="Schwartz D.C."/>
            <person name="Welch R.A."/>
            <person name="Blattner F.R."/>
        </authorList>
    </citation>
    <scope>NUCLEOTIDE SEQUENCE [LARGE SCALE GENOMIC DNA]</scope>
    <source>
        <strain>O157:H7 / EDL933 / ATCC 700927 / EHEC</strain>
    </source>
</reference>
<reference key="2">
    <citation type="journal article" date="2001" name="DNA Res.">
        <title>Complete genome sequence of enterohemorrhagic Escherichia coli O157:H7 and genomic comparison with a laboratory strain K-12.</title>
        <authorList>
            <person name="Hayashi T."/>
            <person name="Makino K."/>
            <person name="Ohnishi M."/>
            <person name="Kurokawa K."/>
            <person name="Ishii K."/>
            <person name="Yokoyama K."/>
            <person name="Han C.-G."/>
            <person name="Ohtsubo E."/>
            <person name="Nakayama K."/>
            <person name="Murata T."/>
            <person name="Tanaka M."/>
            <person name="Tobe T."/>
            <person name="Iida T."/>
            <person name="Takami H."/>
            <person name="Honda T."/>
            <person name="Sasakawa C."/>
            <person name="Ogasawara N."/>
            <person name="Yasunaga T."/>
            <person name="Kuhara S."/>
            <person name="Shiba T."/>
            <person name="Hattori M."/>
            <person name="Shinagawa H."/>
        </authorList>
    </citation>
    <scope>NUCLEOTIDE SEQUENCE [LARGE SCALE GENOMIC DNA]</scope>
    <source>
        <strain>O157:H7 / Sakai / RIMD 0509952 / EHEC</strain>
    </source>
</reference>
<proteinExistence type="inferred from homology"/>
<comment type="function">
    <text evidence="2">Component of the sulfite reductase complex that catalyzes the 6-electron reduction of sulfite to sulfide. This is one of several activities required for the biosynthesis of L-cysteine from sulfate.</text>
</comment>
<comment type="catalytic activity">
    <reaction evidence="2">
        <text>hydrogen sulfide + 3 NADP(+) + 3 H2O = sulfite + 3 NADPH + 4 H(+)</text>
        <dbReference type="Rhea" id="RHEA:13801"/>
        <dbReference type="ChEBI" id="CHEBI:15377"/>
        <dbReference type="ChEBI" id="CHEBI:15378"/>
        <dbReference type="ChEBI" id="CHEBI:17359"/>
        <dbReference type="ChEBI" id="CHEBI:29919"/>
        <dbReference type="ChEBI" id="CHEBI:57783"/>
        <dbReference type="ChEBI" id="CHEBI:58349"/>
        <dbReference type="EC" id="1.8.1.2"/>
    </reaction>
</comment>
<comment type="cofactor">
    <cofactor evidence="2">
        <name>siroheme</name>
        <dbReference type="ChEBI" id="CHEBI:60052"/>
    </cofactor>
    <text evidence="2">Binds 1 siroheme per subunit.</text>
</comment>
<comment type="cofactor">
    <cofactor evidence="2">
        <name>[4Fe-4S] cluster</name>
        <dbReference type="ChEBI" id="CHEBI:49883"/>
    </cofactor>
    <text evidence="2">Binds 1 [4Fe-4S] cluster per subunit.</text>
</comment>
<comment type="pathway">
    <text evidence="2">Sulfur metabolism; hydrogen sulfide biosynthesis; hydrogen sulfide from sulfite (NADPH route): step 1/1.</text>
</comment>
<comment type="subunit">
    <text evidence="2">Alpha(8)-beta(8). The alpha component is a flavoprotein, the beta component is a hemoprotein.</text>
</comment>
<comment type="similarity">
    <text evidence="2">Belongs to the nitrite and sulfite reductase 4Fe-4S domain family.</text>
</comment>
<protein>
    <recommendedName>
        <fullName evidence="2">Sulfite reductase [NADPH] hemoprotein beta-component</fullName>
        <shortName evidence="2">SiR-HP</shortName>
        <shortName evidence="2">SiRHP</shortName>
        <ecNumber evidence="2">1.8.1.2</ecNumber>
    </recommendedName>
</protein>
<sequence>MSEKHPGPLVVEGKLTDAERMKLESNYLRGTIAEDLNDGLTGGFKGDNFLLIRFHGMYQQDDRDIRAERAEQKLEPRHAMLLRCRLPGGVITTKQWQAIDKFAGENTIYGSIRLTNRQTFQFHGILKKNVKPVHQMLHSVGLDALATANDMNRNVLCTSNPYESQLHAEAYEWAKKISEHLLPRTRAYAEIWLDQEKVATTDEEPILGQTYLPRKFKTTVVIPPQNDIDLHANDMNFVAIAENGKLVGFNLLVGGGLSIEHGNKKTYARTASEFGYLPLEHTLAVAEAVVTTQRDWGNRTDRKNAKTKYTLERVGVETFKAEVERRAGIKFEPIRPYEFTGRGDRIGWVKGIDDNWHLTLFIENGRILDYPGRPLKTGLLEIAKIHKGDFRITANQNLIIAGVPESEKAKIEKIAKESGLMNAVTPQRENSMACVSFPTCPLAMAEAERFLPSFIDNIDNLMAKHGVSDEHIVMRVTGCPNGCGRAMLAEVGLVGKAPGRYNLHLGGNRIGTRIPRMYKENITEPEILASLDELIGRWAKEREAGEGFGDFTVRAGIIRPVLDPARDLWD</sequence>
<feature type="initiator methionine" description="Removed" evidence="1">
    <location>
        <position position="1"/>
    </location>
</feature>
<feature type="chain" id="PRO_0000199897" description="Sulfite reductase [NADPH] hemoprotein beta-component">
    <location>
        <begin position="2"/>
        <end position="570"/>
    </location>
</feature>
<feature type="binding site" evidence="2">
    <location>
        <position position="434"/>
    </location>
    <ligand>
        <name>[4Fe-4S] cluster</name>
        <dbReference type="ChEBI" id="CHEBI:49883"/>
    </ligand>
</feature>
<feature type="binding site" evidence="2">
    <location>
        <position position="440"/>
    </location>
    <ligand>
        <name>[4Fe-4S] cluster</name>
        <dbReference type="ChEBI" id="CHEBI:49883"/>
    </ligand>
</feature>
<feature type="binding site" evidence="2">
    <location>
        <position position="479"/>
    </location>
    <ligand>
        <name>[4Fe-4S] cluster</name>
        <dbReference type="ChEBI" id="CHEBI:49883"/>
    </ligand>
</feature>
<feature type="binding site" evidence="2">
    <location>
        <position position="483"/>
    </location>
    <ligand>
        <name>[4Fe-4S] cluster</name>
        <dbReference type="ChEBI" id="CHEBI:49883"/>
    </ligand>
</feature>
<feature type="binding site" description="axial binding residue" evidence="2">
    <location>
        <position position="483"/>
    </location>
    <ligand>
        <name>siroheme</name>
        <dbReference type="ChEBI" id="CHEBI:60052"/>
    </ligand>
    <ligandPart>
        <name>Fe</name>
        <dbReference type="ChEBI" id="CHEBI:18248"/>
    </ligandPart>
</feature>
<name>CYSI_ECO57</name>
<organism>
    <name type="scientific">Escherichia coli O157:H7</name>
    <dbReference type="NCBI Taxonomy" id="83334"/>
    <lineage>
        <taxon>Bacteria</taxon>
        <taxon>Pseudomonadati</taxon>
        <taxon>Pseudomonadota</taxon>
        <taxon>Gammaproteobacteria</taxon>
        <taxon>Enterobacterales</taxon>
        <taxon>Enterobacteriaceae</taxon>
        <taxon>Escherichia</taxon>
    </lineage>
</organism>
<accession>Q8X7U2</accession>
<accession>Q7AB92</accession>
<gene>
    <name evidence="2" type="primary">cysI</name>
    <name type="ordered locus">Z4073</name>
    <name type="ordered locus">ECs3618</name>
</gene>
<evidence type="ECO:0000250" key="1"/>
<evidence type="ECO:0000255" key="2">
    <source>
        <dbReference type="HAMAP-Rule" id="MF_01540"/>
    </source>
</evidence>